<sequence length="235" mass="25897">MKNFSKRMTTLLSKVEERSYSPIEAIKLVKENANAKFDETIEAHIRLGIDPKYTDQQLRTTVALPSGTGQKIRIAVVTRGEKVNEATKAGADLAGEEDLVDSINKGEMNFDLLISTPDMMPKVAKLGRVLGPRGLMPNPKAGTVTTDLEGAIKEFKAGKLEFRADKAGIVHVRFGKASFSEEALLENLKTLQTTIEKNKPSGAKGKFWRSFFITSTMGPSVEVDINELQDLQKEK</sequence>
<evidence type="ECO:0000255" key="1">
    <source>
        <dbReference type="HAMAP-Rule" id="MF_01318"/>
    </source>
</evidence>
<evidence type="ECO:0000305" key="2"/>
<dbReference type="EMBL" id="CP000095">
    <property type="protein sequence ID" value="AAZ59058.1"/>
    <property type="molecule type" value="Genomic_DNA"/>
</dbReference>
<dbReference type="RefSeq" id="WP_011294203.1">
    <property type="nucleotide sequence ID" value="NC_007335.2"/>
</dbReference>
<dbReference type="SMR" id="Q46HH0"/>
<dbReference type="STRING" id="59920.PMN2A_1570"/>
<dbReference type="KEGG" id="pmn:PMN2A_1570"/>
<dbReference type="HOGENOM" id="CLU_062853_0_0_3"/>
<dbReference type="OrthoDB" id="9803740at2"/>
<dbReference type="PhylomeDB" id="Q46HH0"/>
<dbReference type="Proteomes" id="UP000002535">
    <property type="component" value="Chromosome"/>
</dbReference>
<dbReference type="GO" id="GO:0015934">
    <property type="term" value="C:large ribosomal subunit"/>
    <property type="evidence" value="ECO:0007669"/>
    <property type="project" value="InterPro"/>
</dbReference>
<dbReference type="GO" id="GO:0019843">
    <property type="term" value="F:rRNA binding"/>
    <property type="evidence" value="ECO:0007669"/>
    <property type="project" value="UniProtKB-UniRule"/>
</dbReference>
<dbReference type="GO" id="GO:0003735">
    <property type="term" value="F:structural constituent of ribosome"/>
    <property type="evidence" value="ECO:0007669"/>
    <property type="project" value="InterPro"/>
</dbReference>
<dbReference type="GO" id="GO:0000049">
    <property type="term" value="F:tRNA binding"/>
    <property type="evidence" value="ECO:0007669"/>
    <property type="project" value="UniProtKB-KW"/>
</dbReference>
<dbReference type="GO" id="GO:0006417">
    <property type="term" value="P:regulation of translation"/>
    <property type="evidence" value="ECO:0007669"/>
    <property type="project" value="UniProtKB-KW"/>
</dbReference>
<dbReference type="GO" id="GO:0006412">
    <property type="term" value="P:translation"/>
    <property type="evidence" value="ECO:0007669"/>
    <property type="project" value="UniProtKB-UniRule"/>
</dbReference>
<dbReference type="CDD" id="cd00403">
    <property type="entry name" value="Ribosomal_L1"/>
    <property type="match status" value="1"/>
</dbReference>
<dbReference type="FunFam" id="3.40.50.790:FF:000001">
    <property type="entry name" value="50S ribosomal protein L1"/>
    <property type="match status" value="1"/>
</dbReference>
<dbReference type="Gene3D" id="3.30.190.20">
    <property type="match status" value="1"/>
</dbReference>
<dbReference type="Gene3D" id="3.40.50.790">
    <property type="match status" value="1"/>
</dbReference>
<dbReference type="HAMAP" id="MF_01318_B">
    <property type="entry name" value="Ribosomal_uL1_B"/>
    <property type="match status" value="1"/>
</dbReference>
<dbReference type="InterPro" id="IPR005878">
    <property type="entry name" value="Ribosom_uL1_bac-type"/>
</dbReference>
<dbReference type="InterPro" id="IPR002143">
    <property type="entry name" value="Ribosomal_uL1"/>
</dbReference>
<dbReference type="InterPro" id="IPR023674">
    <property type="entry name" value="Ribosomal_uL1-like"/>
</dbReference>
<dbReference type="InterPro" id="IPR028364">
    <property type="entry name" value="Ribosomal_uL1/biogenesis"/>
</dbReference>
<dbReference type="InterPro" id="IPR016095">
    <property type="entry name" value="Ribosomal_uL1_3-a/b-sand"/>
</dbReference>
<dbReference type="InterPro" id="IPR023673">
    <property type="entry name" value="Ribosomal_uL1_CS"/>
</dbReference>
<dbReference type="NCBIfam" id="TIGR01169">
    <property type="entry name" value="rplA_bact"/>
    <property type="match status" value="1"/>
</dbReference>
<dbReference type="PANTHER" id="PTHR36427">
    <property type="entry name" value="54S RIBOSOMAL PROTEIN L1, MITOCHONDRIAL"/>
    <property type="match status" value="1"/>
</dbReference>
<dbReference type="PANTHER" id="PTHR36427:SF3">
    <property type="entry name" value="LARGE RIBOSOMAL SUBUNIT PROTEIN UL1M"/>
    <property type="match status" value="1"/>
</dbReference>
<dbReference type="Pfam" id="PF00687">
    <property type="entry name" value="Ribosomal_L1"/>
    <property type="match status" value="1"/>
</dbReference>
<dbReference type="PIRSF" id="PIRSF002155">
    <property type="entry name" value="Ribosomal_L1"/>
    <property type="match status" value="1"/>
</dbReference>
<dbReference type="SUPFAM" id="SSF56808">
    <property type="entry name" value="Ribosomal protein L1"/>
    <property type="match status" value="1"/>
</dbReference>
<dbReference type="PROSITE" id="PS01199">
    <property type="entry name" value="RIBOSOMAL_L1"/>
    <property type="match status" value="1"/>
</dbReference>
<feature type="chain" id="PRO_0000230624" description="Large ribosomal subunit protein uL1">
    <location>
        <begin position="1"/>
        <end position="235"/>
    </location>
</feature>
<gene>
    <name evidence="1" type="primary">rplA</name>
    <name evidence="1" type="synonym">rpl1</name>
    <name type="ordered locus">PMN2A_1570</name>
</gene>
<accession>Q46HH0</accession>
<protein>
    <recommendedName>
        <fullName evidence="1">Large ribosomal subunit protein uL1</fullName>
    </recommendedName>
    <alternativeName>
        <fullName evidence="2">50S ribosomal protein L1</fullName>
    </alternativeName>
</protein>
<reference key="1">
    <citation type="journal article" date="2007" name="PLoS Genet.">
        <title>Patterns and implications of gene gain and loss in the evolution of Prochlorococcus.</title>
        <authorList>
            <person name="Kettler G.C."/>
            <person name="Martiny A.C."/>
            <person name="Huang K."/>
            <person name="Zucker J."/>
            <person name="Coleman M.L."/>
            <person name="Rodrigue S."/>
            <person name="Chen F."/>
            <person name="Lapidus A."/>
            <person name="Ferriera S."/>
            <person name="Johnson J."/>
            <person name="Steglich C."/>
            <person name="Church G.M."/>
            <person name="Richardson P."/>
            <person name="Chisholm S.W."/>
        </authorList>
    </citation>
    <scope>NUCLEOTIDE SEQUENCE [LARGE SCALE GENOMIC DNA]</scope>
    <source>
        <strain>NATL2A</strain>
    </source>
</reference>
<comment type="function">
    <text evidence="1">Binds directly to 23S rRNA. The L1 stalk is quite mobile in the ribosome, and is involved in E site tRNA release.</text>
</comment>
<comment type="function">
    <text evidence="1">Protein L1 is also a translational repressor protein, it controls the translation of the L11 operon by binding to its mRNA.</text>
</comment>
<comment type="subunit">
    <text evidence="1">Part of the 50S ribosomal subunit.</text>
</comment>
<comment type="similarity">
    <text evidence="1">Belongs to the universal ribosomal protein uL1 family.</text>
</comment>
<organism>
    <name type="scientific">Prochlorococcus marinus (strain NATL2A)</name>
    <dbReference type="NCBI Taxonomy" id="59920"/>
    <lineage>
        <taxon>Bacteria</taxon>
        <taxon>Bacillati</taxon>
        <taxon>Cyanobacteriota</taxon>
        <taxon>Cyanophyceae</taxon>
        <taxon>Synechococcales</taxon>
        <taxon>Prochlorococcaceae</taxon>
        <taxon>Prochlorococcus</taxon>
    </lineage>
</organism>
<name>RL1_PROMT</name>
<keyword id="KW-1185">Reference proteome</keyword>
<keyword id="KW-0678">Repressor</keyword>
<keyword id="KW-0687">Ribonucleoprotein</keyword>
<keyword id="KW-0689">Ribosomal protein</keyword>
<keyword id="KW-0694">RNA-binding</keyword>
<keyword id="KW-0699">rRNA-binding</keyword>
<keyword id="KW-0810">Translation regulation</keyword>
<keyword id="KW-0820">tRNA-binding</keyword>
<proteinExistence type="inferred from homology"/>